<reference key="1">
    <citation type="journal article" date="2002" name="Nucleic Acids Res.">
        <title>Genome sequence of Shigella flexneri 2a: insights into pathogenicity through comparison with genomes of Escherichia coli K12 and O157.</title>
        <authorList>
            <person name="Jin Q."/>
            <person name="Yuan Z."/>
            <person name="Xu J."/>
            <person name="Wang Y."/>
            <person name="Shen Y."/>
            <person name="Lu W."/>
            <person name="Wang J."/>
            <person name="Liu H."/>
            <person name="Yang J."/>
            <person name="Yang F."/>
            <person name="Zhang X."/>
            <person name="Zhang J."/>
            <person name="Yang G."/>
            <person name="Wu H."/>
            <person name="Qu D."/>
            <person name="Dong J."/>
            <person name="Sun L."/>
            <person name="Xue Y."/>
            <person name="Zhao A."/>
            <person name="Gao Y."/>
            <person name="Zhu J."/>
            <person name="Kan B."/>
            <person name="Ding K."/>
            <person name="Chen S."/>
            <person name="Cheng H."/>
            <person name="Yao Z."/>
            <person name="He B."/>
            <person name="Chen R."/>
            <person name="Ma D."/>
            <person name="Qiang B."/>
            <person name="Wen Y."/>
            <person name="Hou Y."/>
            <person name="Yu J."/>
        </authorList>
    </citation>
    <scope>NUCLEOTIDE SEQUENCE [LARGE SCALE GENOMIC DNA]</scope>
    <source>
        <strain>301 / Serotype 2a</strain>
    </source>
</reference>
<reference key="2">
    <citation type="journal article" date="2003" name="Infect. Immun.">
        <title>Complete genome sequence and comparative genomics of Shigella flexneri serotype 2a strain 2457T.</title>
        <authorList>
            <person name="Wei J."/>
            <person name="Goldberg M.B."/>
            <person name="Burland V."/>
            <person name="Venkatesan M.M."/>
            <person name="Deng W."/>
            <person name="Fournier G."/>
            <person name="Mayhew G.F."/>
            <person name="Plunkett G. III"/>
            <person name="Rose D.J."/>
            <person name="Darling A."/>
            <person name="Mau B."/>
            <person name="Perna N.T."/>
            <person name="Payne S.M."/>
            <person name="Runyen-Janecky L.J."/>
            <person name="Zhou S."/>
            <person name="Schwartz D.C."/>
            <person name="Blattner F.R."/>
        </authorList>
    </citation>
    <scope>NUCLEOTIDE SEQUENCE [LARGE SCALE GENOMIC DNA]</scope>
    <source>
        <strain>ATCC 700930 / 2457T / Serotype 2a</strain>
    </source>
</reference>
<keyword id="KW-0963">Cytoplasm</keyword>
<keyword id="KW-1185">Reference proteome</keyword>
<keyword id="KW-0808">Transferase</keyword>
<organism>
    <name type="scientific">Shigella flexneri</name>
    <dbReference type="NCBI Taxonomy" id="623"/>
    <lineage>
        <taxon>Bacteria</taxon>
        <taxon>Pseudomonadati</taxon>
        <taxon>Pseudomonadota</taxon>
        <taxon>Gammaproteobacteria</taxon>
        <taxon>Enterobacterales</taxon>
        <taxon>Enterobacteriaceae</taxon>
        <taxon>Shigella</taxon>
    </lineage>
</organism>
<name>GLPE_SHIFL</name>
<gene>
    <name evidence="1" type="primary">glpE</name>
    <name type="ordered locus">SF3447</name>
    <name type="ordered locus">S4317</name>
</gene>
<dbReference type="EC" id="2.8.1.1" evidence="1"/>
<dbReference type="EMBL" id="AE005674">
    <property type="protein sequence ID" value="AAN44907.2"/>
    <property type="molecule type" value="Genomic_DNA"/>
</dbReference>
<dbReference type="EMBL" id="AE014073">
    <property type="protein sequence ID" value="AAP19274.1"/>
    <property type="molecule type" value="Genomic_DNA"/>
</dbReference>
<dbReference type="RefSeq" id="NP_709200.2">
    <property type="nucleotide sequence ID" value="NC_004337.2"/>
</dbReference>
<dbReference type="RefSeq" id="WP_000371928.1">
    <property type="nucleotide sequence ID" value="NZ_WPGW01000066.1"/>
</dbReference>
<dbReference type="SMR" id="P0A6V7"/>
<dbReference type="STRING" id="198214.SF3447"/>
<dbReference type="DrugBank" id="DB02761">
    <property type="generic name" value="S-Mercaptocysteine"/>
</dbReference>
<dbReference type="PaxDb" id="198214-SF3447"/>
<dbReference type="GeneID" id="1026510"/>
<dbReference type="GeneID" id="93778571"/>
<dbReference type="KEGG" id="sfl:SF3447"/>
<dbReference type="KEGG" id="sfx:S4317"/>
<dbReference type="PATRIC" id="fig|198214.7.peg.4066"/>
<dbReference type="HOGENOM" id="CLU_089574_14_0_6"/>
<dbReference type="Proteomes" id="UP000001006">
    <property type="component" value="Chromosome"/>
</dbReference>
<dbReference type="Proteomes" id="UP000002673">
    <property type="component" value="Chromosome"/>
</dbReference>
<dbReference type="GO" id="GO:0005737">
    <property type="term" value="C:cytoplasm"/>
    <property type="evidence" value="ECO:0007669"/>
    <property type="project" value="UniProtKB-SubCell"/>
</dbReference>
<dbReference type="GO" id="GO:0004792">
    <property type="term" value="F:thiosulfate-cyanide sulfurtransferase activity"/>
    <property type="evidence" value="ECO:0007669"/>
    <property type="project" value="UniProtKB-UniRule"/>
</dbReference>
<dbReference type="GO" id="GO:0006071">
    <property type="term" value="P:glycerol metabolic process"/>
    <property type="evidence" value="ECO:0007669"/>
    <property type="project" value="UniProtKB-UniRule"/>
</dbReference>
<dbReference type="CDD" id="cd01444">
    <property type="entry name" value="GlpE_ST"/>
    <property type="match status" value="1"/>
</dbReference>
<dbReference type="FunFam" id="3.40.250.10:FF:000007">
    <property type="entry name" value="Thiosulfate sulfurtransferase GlpE"/>
    <property type="match status" value="1"/>
</dbReference>
<dbReference type="Gene3D" id="3.40.250.10">
    <property type="entry name" value="Rhodanese-like domain"/>
    <property type="match status" value="1"/>
</dbReference>
<dbReference type="HAMAP" id="MF_01009">
    <property type="entry name" value="Thiosulf_sulfurtr"/>
    <property type="match status" value="1"/>
</dbReference>
<dbReference type="InterPro" id="IPR050229">
    <property type="entry name" value="GlpE_sulfurtransferase"/>
</dbReference>
<dbReference type="InterPro" id="IPR001763">
    <property type="entry name" value="Rhodanese-like_dom"/>
</dbReference>
<dbReference type="InterPro" id="IPR036873">
    <property type="entry name" value="Rhodanese-like_dom_sf"/>
</dbReference>
<dbReference type="InterPro" id="IPR023695">
    <property type="entry name" value="Thiosulf_sulfurTrfase"/>
</dbReference>
<dbReference type="NCBIfam" id="NF001195">
    <property type="entry name" value="PRK00162.1"/>
    <property type="match status" value="1"/>
</dbReference>
<dbReference type="PANTHER" id="PTHR43031">
    <property type="entry name" value="FAD-DEPENDENT OXIDOREDUCTASE"/>
    <property type="match status" value="1"/>
</dbReference>
<dbReference type="PANTHER" id="PTHR43031:SF6">
    <property type="entry name" value="THIOSULFATE SULFURTRANSFERASE GLPE"/>
    <property type="match status" value="1"/>
</dbReference>
<dbReference type="Pfam" id="PF00581">
    <property type="entry name" value="Rhodanese"/>
    <property type="match status" value="1"/>
</dbReference>
<dbReference type="SMART" id="SM00450">
    <property type="entry name" value="RHOD"/>
    <property type="match status" value="1"/>
</dbReference>
<dbReference type="SUPFAM" id="SSF52821">
    <property type="entry name" value="Rhodanese/Cell cycle control phosphatase"/>
    <property type="match status" value="1"/>
</dbReference>
<dbReference type="PROSITE" id="PS50206">
    <property type="entry name" value="RHODANESE_3"/>
    <property type="match status" value="1"/>
</dbReference>
<protein>
    <recommendedName>
        <fullName evidence="1">Thiosulfate sulfurtransferase GlpE</fullName>
        <ecNumber evidence="1">2.8.1.1</ecNumber>
    </recommendedName>
</protein>
<proteinExistence type="inferred from homology"/>
<feature type="chain" id="PRO_0000200566" description="Thiosulfate sulfurtransferase GlpE">
    <location>
        <begin position="1"/>
        <end position="108"/>
    </location>
</feature>
<feature type="domain" description="Rhodanese" evidence="1">
    <location>
        <begin position="17"/>
        <end position="105"/>
    </location>
</feature>
<feature type="active site" description="Cysteine persulfide intermediate" evidence="1">
    <location>
        <position position="65"/>
    </location>
</feature>
<accession>P0A6V7</accession>
<accession>P09390</accession>
<accession>Q47235</accession>
<evidence type="ECO:0000255" key="1">
    <source>
        <dbReference type="HAMAP-Rule" id="MF_01009"/>
    </source>
</evidence>
<sequence length="108" mass="12082">MDQFECINVADAHQKLQEKEAVLVDIRDPQSFAMGHAVQAFHLTNDTLGAFMRDNDFDTPVMVMCYHGNSSKGAAQYLLQQGYDVVYSIDGGFEAWQRQFPAEVAYGA</sequence>
<comment type="function">
    <text evidence="1">Transferase that catalyzes the transfer of sulfur from thiosulfate to thiophilic acceptors such as cyanide or dithiols. May function in a CysM-independent thiosulfate assimilation pathway by catalyzing the conversion of thiosulfate to sulfite, which can then be used for L-cysteine biosynthesis.</text>
</comment>
<comment type="catalytic activity">
    <reaction evidence="1">
        <text>thiosulfate + hydrogen cyanide = thiocyanate + sulfite + 2 H(+)</text>
        <dbReference type="Rhea" id="RHEA:16881"/>
        <dbReference type="ChEBI" id="CHEBI:15378"/>
        <dbReference type="ChEBI" id="CHEBI:17359"/>
        <dbReference type="ChEBI" id="CHEBI:18022"/>
        <dbReference type="ChEBI" id="CHEBI:18407"/>
        <dbReference type="ChEBI" id="CHEBI:33542"/>
        <dbReference type="EC" id="2.8.1.1"/>
    </reaction>
</comment>
<comment type="catalytic activity">
    <reaction evidence="1">
        <text>thiosulfate + [thioredoxin]-dithiol = [thioredoxin]-disulfide + hydrogen sulfide + sulfite + 2 H(+)</text>
        <dbReference type="Rhea" id="RHEA:83859"/>
        <dbReference type="Rhea" id="RHEA-COMP:10698"/>
        <dbReference type="Rhea" id="RHEA-COMP:10700"/>
        <dbReference type="ChEBI" id="CHEBI:15378"/>
        <dbReference type="ChEBI" id="CHEBI:17359"/>
        <dbReference type="ChEBI" id="CHEBI:29919"/>
        <dbReference type="ChEBI" id="CHEBI:29950"/>
        <dbReference type="ChEBI" id="CHEBI:33542"/>
        <dbReference type="ChEBI" id="CHEBI:50058"/>
    </reaction>
</comment>
<comment type="subcellular location">
    <subcellularLocation>
        <location evidence="1">Cytoplasm</location>
    </subcellularLocation>
</comment>
<comment type="similarity">
    <text evidence="1">Belongs to the GlpE family.</text>
</comment>